<proteinExistence type="inferred from homology"/>
<protein>
    <recommendedName>
        <fullName evidence="1">Ribosomal RNA small subunit methyltransferase H</fullName>
        <ecNumber evidence="1">2.1.1.199</ecNumber>
    </recommendedName>
    <alternativeName>
        <fullName evidence="1">16S rRNA m(4)C1402 methyltransferase</fullName>
    </alternativeName>
    <alternativeName>
        <fullName evidence="1">rRNA (cytosine-N(4)-)-methyltransferase RsmH</fullName>
    </alternativeName>
</protein>
<feature type="chain" id="PRO_0000386916" description="Ribosomal RNA small subunit methyltransferase H">
    <location>
        <begin position="1"/>
        <end position="334"/>
    </location>
</feature>
<feature type="region of interest" description="Disordered" evidence="2">
    <location>
        <begin position="1"/>
        <end position="21"/>
    </location>
</feature>
<feature type="binding site" evidence="1">
    <location>
        <begin position="52"/>
        <end position="54"/>
    </location>
    <ligand>
        <name>S-adenosyl-L-methionine</name>
        <dbReference type="ChEBI" id="CHEBI:59789"/>
    </ligand>
</feature>
<feature type="binding site" evidence="1">
    <location>
        <position position="71"/>
    </location>
    <ligand>
        <name>S-adenosyl-L-methionine</name>
        <dbReference type="ChEBI" id="CHEBI:59789"/>
    </ligand>
</feature>
<feature type="binding site" evidence="1">
    <location>
        <position position="98"/>
    </location>
    <ligand>
        <name>S-adenosyl-L-methionine</name>
        <dbReference type="ChEBI" id="CHEBI:59789"/>
    </ligand>
</feature>
<feature type="binding site" evidence="1">
    <location>
        <position position="119"/>
    </location>
    <ligand>
        <name>S-adenosyl-L-methionine</name>
        <dbReference type="ChEBI" id="CHEBI:59789"/>
    </ligand>
</feature>
<feature type="binding site" evidence="1">
    <location>
        <position position="126"/>
    </location>
    <ligand>
        <name>S-adenosyl-L-methionine</name>
        <dbReference type="ChEBI" id="CHEBI:59789"/>
    </ligand>
</feature>
<dbReference type="EC" id="2.1.1.199" evidence="1"/>
<dbReference type="EMBL" id="CP000394">
    <property type="protein sequence ID" value="ABI61335.1"/>
    <property type="molecule type" value="Genomic_DNA"/>
</dbReference>
<dbReference type="RefSeq" id="WP_011631145.1">
    <property type="nucleotide sequence ID" value="NC_008343.2"/>
</dbReference>
<dbReference type="SMR" id="Q0BV17"/>
<dbReference type="STRING" id="391165.GbCGDNIH1_0437"/>
<dbReference type="KEGG" id="gbe:GbCGDNIH1_0437"/>
<dbReference type="eggNOG" id="COG0275">
    <property type="taxonomic scope" value="Bacteria"/>
</dbReference>
<dbReference type="HOGENOM" id="CLU_038422_1_1_5"/>
<dbReference type="Proteomes" id="UP000001963">
    <property type="component" value="Chromosome"/>
</dbReference>
<dbReference type="GO" id="GO:0005737">
    <property type="term" value="C:cytoplasm"/>
    <property type="evidence" value="ECO:0007669"/>
    <property type="project" value="UniProtKB-SubCell"/>
</dbReference>
<dbReference type="GO" id="GO:0071424">
    <property type="term" value="F:rRNA (cytosine-N4-)-methyltransferase activity"/>
    <property type="evidence" value="ECO:0007669"/>
    <property type="project" value="UniProtKB-UniRule"/>
</dbReference>
<dbReference type="GO" id="GO:0070475">
    <property type="term" value="P:rRNA base methylation"/>
    <property type="evidence" value="ECO:0007669"/>
    <property type="project" value="UniProtKB-UniRule"/>
</dbReference>
<dbReference type="Gene3D" id="1.10.150.170">
    <property type="entry name" value="Putative methyltransferase TM0872, insert domain"/>
    <property type="match status" value="1"/>
</dbReference>
<dbReference type="Gene3D" id="3.40.50.150">
    <property type="entry name" value="Vaccinia Virus protein VP39"/>
    <property type="match status" value="1"/>
</dbReference>
<dbReference type="HAMAP" id="MF_01007">
    <property type="entry name" value="16SrRNA_methyltr_H"/>
    <property type="match status" value="1"/>
</dbReference>
<dbReference type="InterPro" id="IPR002903">
    <property type="entry name" value="RsmH"/>
</dbReference>
<dbReference type="InterPro" id="IPR023397">
    <property type="entry name" value="SAM-dep_MeTrfase_MraW_recog"/>
</dbReference>
<dbReference type="InterPro" id="IPR029063">
    <property type="entry name" value="SAM-dependent_MTases_sf"/>
</dbReference>
<dbReference type="NCBIfam" id="TIGR00006">
    <property type="entry name" value="16S rRNA (cytosine(1402)-N(4))-methyltransferase RsmH"/>
    <property type="match status" value="1"/>
</dbReference>
<dbReference type="PANTHER" id="PTHR11265:SF0">
    <property type="entry name" value="12S RRNA N4-METHYLCYTIDINE METHYLTRANSFERASE"/>
    <property type="match status" value="1"/>
</dbReference>
<dbReference type="PANTHER" id="PTHR11265">
    <property type="entry name" value="S-ADENOSYL-METHYLTRANSFERASE MRAW"/>
    <property type="match status" value="1"/>
</dbReference>
<dbReference type="Pfam" id="PF01795">
    <property type="entry name" value="Methyltransf_5"/>
    <property type="match status" value="1"/>
</dbReference>
<dbReference type="PIRSF" id="PIRSF004486">
    <property type="entry name" value="MraW"/>
    <property type="match status" value="1"/>
</dbReference>
<dbReference type="SUPFAM" id="SSF81799">
    <property type="entry name" value="Putative methyltransferase TM0872, insert domain"/>
    <property type="match status" value="1"/>
</dbReference>
<dbReference type="SUPFAM" id="SSF53335">
    <property type="entry name" value="S-adenosyl-L-methionine-dependent methyltransferases"/>
    <property type="match status" value="1"/>
</dbReference>
<evidence type="ECO:0000255" key="1">
    <source>
        <dbReference type="HAMAP-Rule" id="MF_01007"/>
    </source>
</evidence>
<evidence type="ECO:0000256" key="2">
    <source>
        <dbReference type="SAM" id="MobiDB-lite"/>
    </source>
</evidence>
<name>RSMH_GRABC</name>
<comment type="function">
    <text evidence="1">Specifically methylates the N4 position of cytidine in position 1402 (C1402) of 16S rRNA.</text>
</comment>
<comment type="catalytic activity">
    <reaction evidence="1">
        <text>cytidine(1402) in 16S rRNA + S-adenosyl-L-methionine = N(4)-methylcytidine(1402) in 16S rRNA + S-adenosyl-L-homocysteine + H(+)</text>
        <dbReference type="Rhea" id="RHEA:42928"/>
        <dbReference type="Rhea" id="RHEA-COMP:10286"/>
        <dbReference type="Rhea" id="RHEA-COMP:10287"/>
        <dbReference type="ChEBI" id="CHEBI:15378"/>
        <dbReference type="ChEBI" id="CHEBI:57856"/>
        <dbReference type="ChEBI" id="CHEBI:59789"/>
        <dbReference type="ChEBI" id="CHEBI:74506"/>
        <dbReference type="ChEBI" id="CHEBI:82748"/>
        <dbReference type="EC" id="2.1.1.199"/>
    </reaction>
</comment>
<comment type="subcellular location">
    <subcellularLocation>
        <location evidence="1">Cytoplasm</location>
    </subcellularLocation>
</comment>
<comment type="similarity">
    <text evidence="1">Belongs to the methyltransferase superfamily. RsmH family.</text>
</comment>
<accession>Q0BV17</accession>
<reference key="1">
    <citation type="journal article" date="2007" name="J. Bacteriol.">
        <title>Genome sequence analysis of the emerging human pathogenic acetic acid bacterium Granulibacter bethesdensis.</title>
        <authorList>
            <person name="Greenberg D.E."/>
            <person name="Porcella S.F."/>
            <person name="Zelazny A.M."/>
            <person name="Virtaneva K."/>
            <person name="Sturdevant D.E."/>
            <person name="Kupko J.J. III"/>
            <person name="Barbian K.D."/>
            <person name="Babar A."/>
            <person name="Dorward D.W."/>
            <person name="Holland S.M."/>
        </authorList>
    </citation>
    <scope>NUCLEOTIDE SEQUENCE [LARGE SCALE GENOMIC DNA]</scope>
    <source>
        <strain>ATCC BAA-1260 / CGDNIH1</strain>
    </source>
</reference>
<keyword id="KW-0963">Cytoplasm</keyword>
<keyword id="KW-0489">Methyltransferase</keyword>
<keyword id="KW-1185">Reference proteome</keyword>
<keyword id="KW-0698">rRNA processing</keyword>
<keyword id="KW-0949">S-adenosyl-L-methionine</keyword>
<keyword id="KW-0808">Transferase</keyword>
<gene>
    <name evidence="1" type="primary">rsmH</name>
    <name type="synonym">mraW</name>
    <name type="ordered locus">GbCGDNIH1_0437</name>
</gene>
<organism>
    <name type="scientific">Granulibacter bethesdensis (strain ATCC BAA-1260 / CGDNIH1)</name>
    <dbReference type="NCBI Taxonomy" id="391165"/>
    <lineage>
        <taxon>Bacteria</taxon>
        <taxon>Pseudomonadati</taxon>
        <taxon>Pseudomonadota</taxon>
        <taxon>Alphaproteobacteria</taxon>
        <taxon>Acetobacterales</taxon>
        <taxon>Acetobacteraceae</taxon>
        <taxon>Granulibacter</taxon>
    </lineage>
</organism>
<sequence length="334" mass="35952">MNALPIRTAAPSGHSGGHSSTGTHVPVLLNEVLETLSPAPGGVFLDGTFGGGGYTRAILDTAEDSTVWAVDRDPAAITRGEALAARYRGRLHLIQGNFSQMASLLTDRGVNALDGIVLDIGVSSFQIDDPDRGFSFRTDGPLDMRMAGEGTSAADLIARLPEAEIANILYELGEERKSRQIARAIVSARAEEPITTTGRLASIIRCVVPPDRSGIDPATRSFQALRIAVNDELGELERALQQATNLLQPGGRLVIVSFHSLEDRIVKRFMNDAAGNAPSPSRYDPRGLVARTEPRFRLITSKAVRPGTAEQNANPRSRSARLRAIECLRRETTP</sequence>